<evidence type="ECO:0000255" key="1">
    <source>
        <dbReference type="HAMAP-Rule" id="MF_00388"/>
    </source>
</evidence>
<feature type="chain" id="PRO_1000122820" description="UDP-3-O-acyl-N-acetylglucosamine deacetylase">
    <location>
        <begin position="1"/>
        <end position="305"/>
    </location>
</feature>
<feature type="active site" description="Proton donor" evidence="1">
    <location>
        <position position="265"/>
    </location>
</feature>
<feature type="binding site" evidence="1">
    <location>
        <position position="79"/>
    </location>
    <ligand>
        <name>Zn(2+)</name>
        <dbReference type="ChEBI" id="CHEBI:29105"/>
    </ligand>
</feature>
<feature type="binding site" evidence="1">
    <location>
        <position position="238"/>
    </location>
    <ligand>
        <name>Zn(2+)</name>
        <dbReference type="ChEBI" id="CHEBI:29105"/>
    </ligand>
</feature>
<feature type="binding site" evidence="1">
    <location>
        <position position="242"/>
    </location>
    <ligand>
        <name>Zn(2+)</name>
        <dbReference type="ChEBI" id="CHEBI:29105"/>
    </ligand>
</feature>
<accession>B4TXI4</accession>
<organism>
    <name type="scientific">Salmonella schwarzengrund (strain CVM19633)</name>
    <dbReference type="NCBI Taxonomy" id="439843"/>
    <lineage>
        <taxon>Bacteria</taxon>
        <taxon>Pseudomonadati</taxon>
        <taxon>Pseudomonadota</taxon>
        <taxon>Gammaproteobacteria</taxon>
        <taxon>Enterobacterales</taxon>
        <taxon>Enterobacteriaceae</taxon>
        <taxon>Salmonella</taxon>
    </lineage>
</organism>
<dbReference type="EC" id="3.5.1.108" evidence="1"/>
<dbReference type="EMBL" id="CP001127">
    <property type="protein sequence ID" value="ACF92512.1"/>
    <property type="molecule type" value="Genomic_DNA"/>
</dbReference>
<dbReference type="RefSeq" id="WP_000595487.1">
    <property type="nucleotide sequence ID" value="NC_011094.1"/>
</dbReference>
<dbReference type="SMR" id="B4TXI4"/>
<dbReference type="KEGG" id="sew:SeSA_A0150"/>
<dbReference type="HOGENOM" id="CLU_046528_1_0_6"/>
<dbReference type="UniPathway" id="UPA00359">
    <property type="reaction ID" value="UER00478"/>
</dbReference>
<dbReference type="Proteomes" id="UP000001865">
    <property type="component" value="Chromosome"/>
</dbReference>
<dbReference type="GO" id="GO:0016020">
    <property type="term" value="C:membrane"/>
    <property type="evidence" value="ECO:0007669"/>
    <property type="project" value="GOC"/>
</dbReference>
<dbReference type="GO" id="GO:0046872">
    <property type="term" value="F:metal ion binding"/>
    <property type="evidence" value="ECO:0007669"/>
    <property type="project" value="UniProtKB-KW"/>
</dbReference>
<dbReference type="GO" id="GO:0103117">
    <property type="term" value="F:UDP-3-O-acyl-N-acetylglucosamine deacetylase activity"/>
    <property type="evidence" value="ECO:0007669"/>
    <property type="project" value="UniProtKB-UniRule"/>
</dbReference>
<dbReference type="GO" id="GO:0009245">
    <property type="term" value="P:lipid A biosynthetic process"/>
    <property type="evidence" value="ECO:0007669"/>
    <property type="project" value="UniProtKB-UniRule"/>
</dbReference>
<dbReference type="FunFam" id="3.30.1700.10:FF:000001">
    <property type="entry name" value="UDP-3-O-acyl-N-acetylglucosamine deacetylase"/>
    <property type="match status" value="1"/>
</dbReference>
<dbReference type="FunFam" id="3.30.230.20:FF:000001">
    <property type="entry name" value="UDP-3-O-acyl-N-acetylglucosamine deacetylase"/>
    <property type="match status" value="1"/>
</dbReference>
<dbReference type="Gene3D" id="3.30.230.20">
    <property type="entry name" value="lpxc deacetylase, domain 1"/>
    <property type="match status" value="1"/>
</dbReference>
<dbReference type="Gene3D" id="3.30.1700.10">
    <property type="entry name" value="lpxc deacetylase, domain 2"/>
    <property type="match status" value="1"/>
</dbReference>
<dbReference type="HAMAP" id="MF_00388">
    <property type="entry name" value="LpxC"/>
    <property type="match status" value="1"/>
</dbReference>
<dbReference type="InterPro" id="IPR020568">
    <property type="entry name" value="Ribosomal_Su5_D2-typ_SF"/>
</dbReference>
<dbReference type="InterPro" id="IPR004463">
    <property type="entry name" value="UDP-acyl_GlcNac_deAcase"/>
</dbReference>
<dbReference type="InterPro" id="IPR011334">
    <property type="entry name" value="UDP-acyl_GlcNac_deAcase_C"/>
</dbReference>
<dbReference type="InterPro" id="IPR015870">
    <property type="entry name" value="UDP-acyl_N-AcGlcN_deAcase_N"/>
</dbReference>
<dbReference type="NCBIfam" id="TIGR00325">
    <property type="entry name" value="lpxC"/>
    <property type="match status" value="1"/>
</dbReference>
<dbReference type="PANTHER" id="PTHR33694">
    <property type="entry name" value="UDP-3-O-ACYL-N-ACETYLGLUCOSAMINE DEACETYLASE 1, MITOCHONDRIAL-RELATED"/>
    <property type="match status" value="1"/>
</dbReference>
<dbReference type="PANTHER" id="PTHR33694:SF1">
    <property type="entry name" value="UDP-3-O-ACYL-N-ACETYLGLUCOSAMINE DEACETYLASE 1, MITOCHONDRIAL-RELATED"/>
    <property type="match status" value="1"/>
</dbReference>
<dbReference type="Pfam" id="PF03331">
    <property type="entry name" value="LpxC"/>
    <property type="match status" value="1"/>
</dbReference>
<dbReference type="SUPFAM" id="SSF54211">
    <property type="entry name" value="Ribosomal protein S5 domain 2-like"/>
    <property type="match status" value="2"/>
</dbReference>
<protein>
    <recommendedName>
        <fullName evidence="1">UDP-3-O-acyl-N-acetylglucosamine deacetylase</fullName>
        <shortName evidence="1">UDP-3-O-acyl-GlcNAc deacetylase</shortName>
        <ecNumber evidence="1">3.5.1.108</ecNumber>
    </recommendedName>
    <alternativeName>
        <fullName evidence="1">UDP-3-O-[R-3-hydroxymyristoyl]-N-acetylglucosamine deacetylase</fullName>
    </alternativeName>
</protein>
<name>LPXC_SALSV</name>
<sequence length="305" mass="33985">MIKQRTLKRIVQATGVGLHTGKKVTLTLRPAPANTGVIYRRTDLNPPVDFPADAKSVRDTMLCTCLVNEHDVRISTVEHLNAALAGLGIDNIVIEVNAPEIPIMDGSAAPFVYLLLDAGIDELNCAKKFVRIKETVRVEDGDKWAEFRPYNGFTLDFTIDFNHPAIDSSSQRYAMNFSADAFMRQISRARTFGFMRDIEYLQSRGLCLGGSFDCAIVVDDYRVLNEDGLRFEDEFVRHKMLDAIGDLFMCGHNIIGAFTAYKSGHALNNKLLQAVLAKQEAWEFVTFQDDAELPLAFKAPSTVLA</sequence>
<gene>
    <name evidence="1" type="primary">lpxC</name>
    <name type="ordered locus">SeSA_A0150</name>
</gene>
<keyword id="KW-0378">Hydrolase</keyword>
<keyword id="KW-0441">Lipid A biosynthesis</keyword>
<keyword id="KW-0444">Lipid biosynthesis</keyword>
<keyword id="KW-0443">Lipid metabolism</keyword>
<keyword id="KW-0479">Metal-binding</keyword>
<keyword id="KW-0862">Zinc</keyword>
<reference key="1">
    <citation type="journal article" date="2011" name="J. Bacteriol.">
        <title>Comparative genomics of 28 Salmonella enterica isolates: evidence for CRISPR-mediated adaptive sublineage evolution.</title>
        <authorList>
            <person name="Fricke W.F."/>
            <person name="Mammel M.K."/>
            <person name="McDermott P.F."/>
            <person name="Tartera C."/>
            <person name="White D.G."/>
            <person name="Leclerc J.E."/>
            <person name="Ravel J."/>
            <person name="Cebula T.A."/>
        </authorList>
    </citation>
    <scope>NUCLEOTIDE SEQUENCE [LARGE SCALE GENOMIC DNA]</scope>
    <source>
        <strain>CVM19633</strain>
    </source>
</reference>
<proteinExistence type="inferred from homology"/>
<comment type="function">
    <text evidence="1">Catalyzes the hydrolysis of UDP-3-O-myristoyl-N-acetylglucosamine to form UDP-3-O-myristoylglucosamine and acetate, the committed step in lipid A biosynthesis.</text>
</comment>
<comment type="catalytic activity">
    <reaction evidence="1">
        <text>a UDP-3-O-[(3R)-3-hydroxyacyl]-N-acetyl-alpha-D-glucosamine + H2O = a UDP-3-O-[(3R)-3-hydroxyacyl]-alpha-D-glucosamine + acetate</text>
        <dbReference type="Rhea" id="RHEA:67816"/>
        <dbReference type="ChEBI" id="CHEBI:15377"/>
        <dbReference type="ChEBI" id="CHEBI:30089"/>
        <dbReference type="ChEBI" id="CHEBI:137740"/>
        <dbReference type="ChEBI" id="CHEBI:173225"/>
        <dbReference type="EC" id="3.5.1.108"/>
    </reaction>
</comment>
<comment type="cofactor">
    <cofactor evidence="1">
        <name>Zn(2+)</name>
        <dbReference type="ChEBI" id="CHEBI:29105"/>
    </cofactor>
</comment>
<comment type="pathway">
    <text evidence="1">Glycolipid biosynthesis; lipid IV(A) biosynthesis; lipid IV(A) from (3R)-3-hydroxytetradecanoyl-[acyl-carrier-protein] and UDP-N-acetyl-alpha-D-glucosamine: step 2/6.</text>
</comment>
<comment type="similarity">
    <text evidence="1">Belongs to the LpxC family.</text>
</comment>